<name>ARGJ_CHAGB</name>
<comment type="function">
    <text evidence="1">Catalyzes two activities which are involved in the cyclic version of arginine biosynthesis: the synthesis of acetylglutamate from glutamate and acetyl-CoA, and of ornithine by transacetylation between acetylornithine and glutamate.</text>
</comment>
<comment type="catalytic activity">
    <reaction evidence="1">
        <text>N(2)-acetyl-L-ornithine + L-glutamate = N-acetyl-L-glutamate + L-ornithine</text>
        <dbReference type="Rhea" id="RHEA:15349"/>
        <dbReference type="ChEBI" id="CHEBI:29985"/>
        <dbReference type="ChEBI" id="CHEBI:44337"/>
        <dbReference type="ChEBI" id="CHEBI:46911"/>
        <dbReference type="ChEBI" id="CHEBI:57805"/>
        <dbReference type="EC" id="2.3.1.35"/>
    </reaction>
</comment>
<comment type="catalytic activity">
    <reaction evidence="1">
        <text>L-glutamate + acetyl-CoA = N-acetyl-L-glutamate + CoA + H(+)</text>
        <dbReference type="Rhea" id="RHEA:24292"/>
        <dbReference type="ChEBI" id="CHEBI:15378"/>
        <dbReference type="ChEBI" id="CHEBI:29985"/>
        <dbReference type="ChEBI" id="CHEBI:44337"/>
        <dbReference type="ChEBI" id="CHEBI:57287"/>
        <dbReference type="ChEBI" id="CHEBI:57288"/>
        <dbReference type="EC" id="2.3.1.1"/>
    </reaction>
</comment>
<comment type="pathway">
    <text evidence="1">Amino-acid biosynthesis; L-arginine biosynthesis; L-ornithine and N-acetyl-L-glutamate from L-glutamate and N(2)-acetyl-L-ornithine (cyclic): step 1/1.</text>
</comment>
<comment type="pathway">
    <text evidence="1">Amino-acid biosynthesis; L-arginine biosynthesis; N(2)-acetyl-L-ornithine from L-glutamate: step 1/4.</text>
</comment>
<comment type="subunit">
    <text evidence="1">Heterodimer of an alpha and a beta chain.</text>
</comment>
<comment type="subcellular location">
    <subcellularLocation>
        <location evidence="1">Mitochondrion matrix</location>
    </subcellularLocation>
</comment>
<comment type="PTM">
    <text evidence="1">The alpha and beta chains are autoproteolytically processed from a single precursor protein within the mitochondrion.</text>
</comment>
<comment type="similarity">
    <text evidence="1">Belongs to the ArgJ family.</text>
</comment>
<proteinExistence type="inferred from homology"/>
<sequence length="471" mass="49973">MAMAGCNGFFLHQLRQPRLQLARQLGRTPSRAYSAPSNGSIPAAKKKYVPTKGTYPLGFRTSGTIVGVKPSNTTKPDLALLTSDAPCVAAAVFTKNKFQAAPVTFSRNLLERRKNQGIQSVIINSGCANAVTGKGGLEDATKMAQEADKCTGQNESTIVMSTGVIGQRLPIDKILNKVPSAHGALGGSHDHWLAAAKAICTTDTFPKLMSRTFALPSSPGVEYRIAGMTKGAGMIHPNMATLLGVIATDAPITSAALPSALKHAVDRSFNSITIDGDTSTNDTVALFANGAAGGKEVAEGTPDYDAFRAVLTDFAAELAQLVVRDGEGATKFVTVRVTESASEEAARRIASTIARSPLVKTALYGKDANWGRILCATGYSLISEPGQPINDVPEIAPEKTNVSFIPTDGTAELKLLVNGEPEKVDEARAAEILELEDLEILVRLGQGDKQATYWTCDYSHEYITINGDYRT</sequence>
<gene>
    <name type="ORF">CHGG_02627</name>
</gene>
<feature type="transit peptide" description="Mitochondrion" evidence="1">
    <location>
        <begin position="1"/>
        <end position="33"/>
    </location>
</feature>
<feature type="chain" id="PRO_0000398040" description="Arginine biosynthesis bifunctional protein ArgJ alpha chain" evidence="1">
    <location>
        <begin position="34"/>
        <end position="240"/>
    </location>
</feature>
<feature type="chain" id="PRO_0000398041" description="Arginine biosynthesis bifunctional protein ArgJ beta chain" evidence="1">
    <location>
        <begin position="241"/>
        <end position="471"/>
    </location>
</feature>
<feature type="active site" description="Nucleophile" evidence="1">
    <location>
        <position position="241"/>
    </location>
</feature>
<feature type="binding site" evidence="1">
    <location>
        <position position="201"/>
    </location>
    <ligand>
        <name>substrate</name>
    </ligand>
</feature>
<feature type="binding site" evidence="1">
    <location>
        <position position="230"/>
    </location>
    <ligand>
        <name>substrate</name>
    </ligand>
</feature>
<feature type="binding site" evidence="1">
    <location>
        <position position="241"/>
    </location>
    <ligand>
        <name>substrate</name>
    </ligand>
</feature>
<feature type="binding site" evidence="1">
    <location>
        <position position="327"/>
    </location>
    <ligand>
        <name>substrate</name>
    </ligand>
</feature>
<feature type="binding site" evidence="1">
    <location>
        <position position="466"/>
    </location>
    <ligand>
        <name>substrate</name>
    </ligand>
</feature>
<feature type="binding site" evidence="1">
    <location>
        <position position="471"/>
    </location>
    <ligand>
        <name>substrate</name>
    </ligand>
</feature>
<feature type="site" description="Involved in the stabilization of negative charge on the oxyanion by the formation of the oxyanion hole" evidence="1">
    <location>
        <position position="162"/>
    </location>
</feature>
<feature type="site" description="Involved in the stabilization of negative charge on the oxyanion by the formation of the oxyanion hole" evidence="1">
    <location>
        <position position="163"/>
    </location>
</feature>
<feature type="site" description="Cleavage; by autolysis" evidence="1">
    <location>
        <begin position="240"/>
        <end position="241"/>
    </location>
</feature>
<keyword id="KW-0012">Acyltransferase</keyword>
<keyword id="KW-0028">Amino-acid biosynthesis</keyword>
<keyword id="KW-0055">Arginine biosynthesis</keyword>
<keyword id="KW-0068">Autocatalytic cleavage</keyword>
<keyword id="KW-0496">Mitochondrion</keyword>
<keyword id="KW-0511">Multifunctional enzyme</keyword>
<keyword id="KW-1185">Reference proteome</keyword>
<keyword id="KW-0808">Transferase</keyword>
<keyword id="KW-0809">Transit peptide</keyword>
<evidence type="ECO:0000255" key="1">
    <source>
        <dbReference type="HAMAP-Rule" id="MF_03124"/>
    </source>
</evidence>
<accession>Q2HAX7</accession>
<reference key="1">
    <citation type="journal article" date="2015" name="Genome Announc.">
        <title>Draft genome sequence of the cellulolytic fungus Chaetomium globosum.</title>
        <authorList>
            <person name="Cuomo C.A."/>
            <person name="Untereiner W.A."/>
            <person name="Ma L.-J."/>
            <person name="Grabherr M."/>
            <person name="Birren B.W."/>
        </authorList>
    </citation>
    <scope>NUCLEOTIDE SEQUENCE [LARGE SCALE GENOMIC DNA]</scope>
    <source>
        <strain>ATCC 6205 / CBS 148.51 / DSM 1962 / NBRC 6347 / NRRL 1970</strain>
    </source>
</reference>
<dbReference type="EC" id="2.3.1.35" evidence="1"/>
<dbReference type="EC" id="2.3.1.1" evidence="1"/>
<dbReference type="EMBL" id="CH408030">
    <property type="protein sequence ID" value="EAQ90692.1"/>
    <property type="molecule type" value="Genomic_DNA"/>
</dbReference>
<dbReference type="RefSeq" id="XP_001229143.1">
    <property type="nucleotide sequence ID" value="XM_001229142.1"/>
</dbReference>
<dbReference type="SMR" id="Q2HAX7"/>
<dbReference type="FunCoup" id="Q2HAX7">
    <property type="interactions" value="268"/>
</dbReference>
<dbReference type="STRING" id="306901.Q2HAX7"/>
<dbReference type="MEROPS" id="T05.001"/>
<dbReference type="GeneID" id="4389645"/>
<dbReference type="VEuPathDB" id="FungiDB:CHGG_02627"/>
<dbReference type="eggNOG" id="KOG2786">
    <property type="taxonomic scope" value="Eukaryota"/>
</dbReference>
<dbReference type="HOGENOM" id="CLU_027172_1_0_1"/>
<dbReference type="InParanoid" id="Q2HAX7"/>
<dbReference type="OMA" id="WGRIVMA"/>
<dbReference type="OrthoDB" id="4199794at2759"/>
<dbReference type="UniPathway" id="UPA00068">
    <property type="reaction ID" value="UER00106"/>
</dbReference>
<dbReference type="UniPathway" id="UPA00068">
    <property type="reaction ID" value="UER00111"/>
</dbReference>
<dbReference type="Proteomes" id="UP000001056">
    <property type="component" value="Unassembled WGS sequence"/>
</dbReference>
<dbReference type="GO" id="GO:0005759">
    <property type="term" value="C:mitochondrial matrix"/>
    <property type="evidence" value="ECO:0007669"/>
    <property type="project" value="UniProtKB-SubCell"/>
</dbReference>
<dbReference type="GO" id="GO:0004358">
    <property type="term" value="F:glutamate N-acetyltransferase activity"/>
    <property type="evidence" value="ECO:0007669"/>
    <property type="project" value="UniProtKB-UniRule"/>
</dbReference>
<dbReference type="GO" id="GO:0004042">
    <property type="term" value="F:L-glutamate N-acetyltransferase activity"/>
    <property type="evidence" value="ECO:0007669"/>
    <property type="project" value="UniProtKB-UniRule"/>
</dbReference>
<dbReference type="GO" id="GO:0006526">
    <property type="term" value="P:L-arginine biosynthetic process"/>
    <property type="evidence" value="ECO:0007669"/>
    <property type="project" value="UniProtKB-UniRule"/>
</dbReference>
<dbReference type="GO" id="GO:0006592">
    <property type="term" value="P:ornithine biosynthetic process"/>
    <property type="evidence" value="ECO:0007669"/>
    <property type="project" value="EnsemblFungi"/>
</dbReference>
<dbReference type="CDD" id="cd02152">
    <property type="entry name" value="OAT"/>
    <property type="match status" value="1"/>
</dbReference>
<dbReference type="FunFam" id="3.60.70.12:FF:000001">
    <property type="entry name" value="Arginine biosynthesis bifunctional protein ArgJ, chloroplastic"/>
    <property type="match status" value="1"/>
</dbReference>
<dbReference type="FunFam" id="3.10.20.340:FF:000002">
    <property type="entry name" value="Arginine biosynthesis bifunctional protein ArgJ, mitochondrial"/>
    <property type="match status" value="1"/>
</dbReference>
<dbReference type="FunFam" id="3.30.2330.10:FF:000001">
    <property type="entry name" value="Arginine biosynthesis bifunctional protein ArgJ, mitochondrial"/>
    <property type="match status" value="1"/>
</dbReference>
<dbReference type="Gene3D" id="3.30.2330.10">
    <property type="entry name" value="arginine biosynthesis bifunctional protein suprefamily"/>
    <property type="match status" value="1"/>
</dbReference>
<dbReference type="Gene3D" id="3.10.20.340">
    <property type="entry name" value="ArgJ beta chain, C-terminal domain"/>
    <property type="match status" value="1"/>
</dbReference>
<dbReference type="Gene3D" id="3.60.70.12">
    <property type="entry name" value="L-amino peptidase D-ALA esterase/amidase"/>
    <property type="match status" value="1"/>
</dbReference>
<dbReference type="HAMAP" id="MF_01106">
    <property type="entry name" value="ArgJ"/>
    <property type="match status" value="1"/>
</dbReference>
<dbReference type="InterPro" id="IPR002813">
    <property type="entry name" value="Arg_biosynth_ArgJ"/>
</dbReference>
<dbReference type="InterPro" id="IPR016117">
    <property type="entry name" value="ArgJ-like_dom_sf"/>
</dbReference>
<dbReference type="InterPro" id="IPR042195">
    <property type="entry name" value="ArgJ_beta_C"/>
</dbReference>
<dbReference type="NCBIfam" id="TIGR00120">
    <property type="entry name" value="ArgJ"/>
    <property type="match status" value="1"/>
</dbReference>
<dbReference type="NCBIfam" id="NF003802">
    <property type="entry name" value="PRK05388.1"/>
    <property type="match status" value="1"/>
</dbReference>
<dbReference type="PANTHER" id="PTHR23100">
    <property type="entry name" value="ARGININE BIOSYNTHESIS BIFUNCTIONAL PROTEIN ARGJ"/>
    <property type="match status" value="1"/>
</dbReference>
<dbReference type="PANTHER" id="PTHR23100:SF0">
    <property type="entry name" value="ARGININE BIOSYNTHESIS BIFUNCTIONAL PROTEIN ARGJ, MITOCHONDRIAL"/>
    <property type="match status" value="1"/>
</dbReference>
<dbReference type="Pfam" id="PF01960">
    <property type="entry name" value="ArgJ"/>
    <property type="match status" value="1"/>
</dbReference>
<dbReference type="SUPFAM" id="SSF56266">
    <property type="entry name" value="DmpA/ArgJ-like"/>
    <property type="match status" value="1"/>
</dbReference>
<organism>
    <name type="scientific">Chaetomium globosum (strain ATCC 6205 / CBS 148.51 / DSM 1962 / NBRC 6347 / NRRL 1970)</name>
    <name type="common">Soil fungus</name>
    <dbReference type="NCBI Taxonomy" id="306901"/>
    <lineage>
        <taxon>Eukaryota</taxon>
        <taxon>Fungi</taxon>
        <taxon>Dikarya</taxon>
        <taxon>Ascomycota</taxon>
        <taxon>Pezizomycotina</taxon>
        <taxon>Sordariomycetes</taxon>
        <taxon>Sordariomycetidae</taxon>
        <taxon>Sordariales</taxon>
        <taxon>Chaetomiaceae</taxon>
        <taxon>Chaetomium</taxon>
    </lineage>
</organism>
<protein>
    <recommendedName>
        <fullName evidence="1">Arginine biosynthesis bifunctional protein ArgJ, mitochondrial</fullName>
    </recommendedName>
    <domain>
        <recommendedName>
            <fullName evidence="1">Glutamate N-acetyltransferase</fullName>
            <shortName evidence="1">GAT</shortName>
            <ecNumber evidence="1">2.3.1.35</ecNumber>
        </recommendedName>
        <alternativeName>
            <fullName evidence="1">Ornithine acetyltransferase</fullName>
            <shortName evidence="1">OATase</shortName>
        </alternativeName>
        <alternativeName>
            <fullName evidence="1">Ornithine transacetylase</fullName>
        </alternativeName>
    </domain>
    <domain>
        <recommendedName>
            <fullName evidence="1">Amino-acid acetyltransferase</fullName>
            <ecNumber evidence="1">2.3.1.1</ecNumber>
        </recommendedName>
        <alternativeName>
            <fullName evidence="1">N-acetylglutamate synthase</fullName>
            <shortName evidence="1">AGS</shortName>
        </alternativeName>
    </domain>
    <component>
        <recommendedName>
            <fullName evidence="1">Arginine biosynthesis bifunctional protein ArgJ alpha chain</fullName>
        </recommendedName>
    </component>
    <component>
        <recommendedName>
            <fullName evidence="1">Arginine biosynthesis bifunctional protein ArgJ beta chain</fullName>
        </recommendedName>
    </component>
</protein>